<sequence length="507" mass="60683">MEELQRYLKMDRSRERDFLYSLLFQEYIYALAHDFGLTKSIPYESMQILSYDNKYSSLIVKRLIIRMYQQKHLIILDNDSKNKNFLGHNKNLYSQMISEGFAVIVEIPFALRLVSSYQGKEIEKSINLGSIHSTFPFLEDKFVHLNHVLNILIPYPIHFELIVQNLRCWIQDASFLHLLRFFLYEYHNWNSFTTQKMKQNSLFLKENRRFFLFLYNFHVYESESIFLFLRKKSYHLRSTSSIAFLDRTHFFGKIEHLKVVFRNDFHTMLWLFKDPFMHYFRYQGKSIMSSKGTPLLMKKWKYYLVNLWECHFYFWSQPNRIHINQLSNIFLNFLGYLSSVRPNPSVVRNQMLENAFIIDISRNKLSTLVPIIPLIGSLAKAKFCNLSGQPISKPAWTDSLDSDIIDRFGRICRNVSHYYSGSSKKKTLYRIKYILRLSCARTLARKHKSTVRSFLKRLGSEFLEEFLIEEEQVLSFILPKISSSSQRLSKERIWYFDIIRINDLMDL</sequence>
<dbReference type="EMBL" id="DQ359689">
    <property type="protein sequence ID" value="ABC70737.1"/>
    <property type="molecule type" value="Genomic_DNA"/>
</dbReference>
<dbReference type="RefSeq" id="YP_001004167.1">
    <property type="nucleotide sequence ID" value="NC_008796.1"/>
</dbReference>
<dbReference type="GeneID" id="4712200"/>
<dbReference type="GO" id="GO:0009507">
    <property type="term" value="C:chloroplast"/>
    <property type="evidence" value="ECO:0007669"/>
    <property type="project" value="UniProtKB-SubCell"/>
</dbReference>
<dbReference type="GO" id="GO:0003723">
    <property type="term" value="F:RNA binding"/>
    <property type="evidence" value="ECO:0007669"/>
    <property type="project" value="UniProtKB-KW"/>
</dbReference>
<dbReference type="GO" id="GO:0006397">
    <property type="term" value="P:mRNA processing"/>
    <property type="evidence" value="ECO:0007669"/>
    <property type="project" value="UniProtKB-KW"/>
</dbReference>
<dbReference type="GO" id="GO:0008380">
    <property type="term" value="P:RNA splicing"/>
    <property type="evidence" value="ECO:0007669"/>
    <property type="project" value="UniProtKB-UniRule"/>
</dbReference>
<dbReference type="GO" id="GO:0008033">
    <property type="term" value="P:tRNA processing"/>
    <property type="evidence" value="ECO:0007669"/>
    <property type="project" value="UniProtKB-KW"/>
</dbReference>
<dbReference type="HAMAP" id="MF_01390">
    <property type="entry name" value="MatK"/>
    <property type="match status" value="1"/>
</dbReference>
<dbReference type="InterPro" id="IPR024937">
    <property type="entry name" value="Domain_X"/>
</dbReference>
<dbReference type="InterPro" id="IPR002866">
    <property type="entry name" value="Maturase_MatK"/>
</dbReference>
<dbReference type="InterPro" id="IPR024942">
    <property type="entry name" value="Maturase_MatK_N"/>
</dbReference>
<dbReference type="PANTHER" id="PTHR34811">
    <property type="entry name" value="MATURASE K"/>
    <property type="match status" value="1"/>
</dbReference>
<dbReference type="PANTHER" id="PTHR34811:SF1">
    <property type="entry name" value="MATURASE K"/>
    <property type="match status" value="1"/>
</dbReference>
<dbReference type="Pfam" id="PF01348">
    <property type="entry name" value="Intron_maturas2"/>
    <property type="match status" value="1"/>
</dbReference>
<dbReference type="Pfam" id="PF01824">
    <property type="entry name" value="MatK_N"/>
    <property type="match status" value="1"/>
</dbReference>
<accession>A1XGL9</accession>
<reference key="1">
    <citation type="journal article" date="2007" name="BMC Genomics">
        <title>Comparative chloroplast genomics: analyses including new sequences from the angiosperms Nuphar advena and Ranunculus macranthus.</title>
        <authorList>
            <person name="Raubeson L.A."/>
            <person name="Peery R."/>
            <person name="Chumley T.W."/>
            <person name="Dziubek C."/>
            <person name="Fourcade H.M."/>
            <person name="Boore J.L."/>
            <person name="Jansen R.K."/>
        </authorList>
    </citation>
    <scope>NUCLEOTIDE SEQUENCE [LARGE SCALE GENOMIC DNA]</scope>
</reference>
<gene>
    <name evidence="1" type="primary">matK</name>
</gene>
<proteinExistence type="inferred from homology"/>
<name>MATK_RANMC</name>
<evidence type="ECO:0000255" key="1">
    <source>
        <dbReference type="HAMAP-Rule" id="MF_01390"/>
    </source>
</evidence>
<keyword id="KW-0150">Chloroplast</keyword>
<keyword id="KW-0507">mRNA processing</keyword>
<keyword id="KW-0934">Plastid</keyword>
<keyword id="KW-0694">RNA-binding</keyword>
<keyword id="KW-0819">tRNA processing</keyword>
<organism>
    <name type="scientific">Ranunculus macranthus</name>
    <name type="common">Large buttercup</name>
    <dbReference type="NCBI Taxonomy" id="334596"/>
    <lineage>
        <taxon>Eukaryota</taxon>
        <taxon>Viridiplantae</taxon>
        <taxon>Streptophyta</taxon>
        <taxon>Embryophyta</taxon>
        <taxon>Tracheophyta</taxon>
        <taxon>Spermatophyta</taxon>
        <taxon>Magnoliopsida</taxon>
        <taxon>Ranunculales</taxon>
        <taxon>Ranunculaceae</taxon>
        <taxon>Ranunculoideae</taxon>
        <taxon>Ranunculeae</taxon>
        <taxon>Ranunculus</taxon>
    </lineage>
</organism>
<feature type="chain" id="PRO_0000355961" description="Maturase K">
    <location>
        <begin position="1"/>
        <end position="507"/>
    </location>
</feature>
<comment type="function">
    <text evidence="1">Usually encoded in the trnK tRNA gene intron. Probably assists in splicing its own and other chloroplast group II introns.</text>
</comment>
<comment type="subcellular location">
    <subcellularLocation>
        <location>Plastid</location>
        <location>Chloroplast</location>
    </subcellularLocation>
</comment>
<comment type="similarity">
    <text evidence="1">Belongs to the intron maturase 2 family. MatK subfamily.</text>
</comment>
<protein>
    <recommendedName>
        <fullName evidence="1">Maturase K</fullName>
    </recommendedName>
    <alternativeName>
        <fullName evidence="1">Intron maturase</fullName>
    </alternativeName>
</protein>
<geneLocation type="chloroplast"/>